<gene>
    <name evidence="1" type="primary">ybjQ</name>
    <name type="ordered locus">ECDH10B_0936</name>
</gene>
<protein>
    <recommendedName>
        <fullName evidence="1">UPF0145 protein YbjQ</fullName>
    </recommendedName>
</protein>
<dbReference type="EMBL" id="CP000948">
    <property type="protein sequence ID" value="ACB02067.1"/>
    <property type="molecule type" value="Genomic_DNA"/>
</dbReference>
<dbReference type="RefSeq" id="WP_001160737.1">
    <property type="nucleotide sequence ID" value="NC_010473.1"/>
</dbReference>
<dbReference type="SMR" id="B1X807"/>
<dbReference type="KEGG" id="ecd:ECDH10B_0936"/>
<dbReference type="HOGENOM" id="CLU_117144_3_0_6"/>
<dbReference type="Gene3D" id="3.30.110.70">
    <property type="entry name" value="Hypothetical protein apc22750. Chain B"/>
    <property type="match status" value="1"/>
</dbReference>
<dbReference type="HAMAP" id="MF_00338">
    <property type="entry name" value="UPF0145"/>
    <property type="match status" value="1"/>
</dbReference>
<dbReference type="InterPro" id="IPR035439">
    <property type="entry name" value="UPF0145_dom_sf"/>
</dbReference>
<dbReference type="InterPro" id="IPR002765">
    <property type="entry name" value="UPF0145_YbjQ-like"/>
</dbReference>
<dbReference type="NCBIfam" id="NF002776">
    <property type="entry name" value="PRK02877.1"/>
    <property type="match status" value="1"/>
</dbReference>
<dbReference type="PANTHER" id="PTHR34068">
    <property type="entry name" value="UPF0145 PROTEIN YBJQ"/>
    <property type="match status" value="1"/>
</dbReference>
<dbReference type="PANTHER" id="PTHR34068:SF1">
    <property type="entry name" value="UPF0145 PROTEIN YBJQ"/>
    <property type="match status" value="1"/>
</dbReference>
<dbReference type="Pfam" id="PF01906">
    <property type="entry name" value="YbjQ_1"/>
    <property type="match status" value="1"/>
</dbReference>
<dbReference type="SUPFAM" id="SSF117782">
    <property type="entry name" value="YbjQ-like"/>
    <property type="match status" value="1"/>
</dbReference>
<evidence type="ECO:0000255" key="1">
    <source>
        <dbReference type="HAMAP-Rule" id="MF_00338"/>
    </source>
</evidence>
<sequence>MQFSTTPTLEGQTIVEYCGVVTGEAILGANIFRDFFAGIRDIVGGRSGAYEKELRKAREIAFEELGSQARALGADAVVGIDIDYETVGQNGSMLMVSVSGTAVKTRR</sequence>
<name>YBJQ_ECODH</name>
<proteinExistence type="inferred from homology"/>
<accession>B1X807</accession>
<reference key="1">
    <citation type="journal article" date="2008" name="J. Bacteriol.">
        <title>The complete genome sequence of Escherichia coli DH10B: insights into the biology of a laboratory workhorse.</title>
        <authorList>
            <person name="Durfee T."/>
            <person name="Nelson R."/>
            <person name="Baldwin S."/>
            <person name="Plunkett G. III"/>
            <person name="Burland V."/>
            <person name="Mau B."/>
            <person name="Petrosino J.F."/>
            <person name="Qin X."/>
            <person name="Muzny D.M."/>
            <person name="Ayele M."/>
            <person name="Gibbs R.A."/>
            <person name="Csorgo B."/>
            <person name="Posfai G."/>
            <person name="Weinstock G.M."/>
            <person name="Blattner F.R."/>
        </authorList>
    </citation>
    <scope>NUCLEOTIDE SEQUENCE [LARGE SCALE GENOMIC DNA]</scope>
    <source>
        <strain>K12 / DH10B</strain>
    </source>
</reference>
<organism>
    <name type="scientific">Escherichia coli (strain K12 / DH10B)</name>
    <dbReference type="NCBI Taxonomy" id="316385"/>
    <lineage>
        <taxon>Bacteria</taxon>
        <taxon>Pseudomonadati</taxon>
        <taxon>Pseudomonadota</taxon>
        <taxon>Gammaproteobacteria</taxon>
        <taxon>Enterobacterales</taxon>
        <taxon>Enterobacteriaceae</taxon>
        <taxon>Escherichia</taxon>
    </lineage>
</organism>
<feature type="chain" id="PRO_1000119993" description="UPF0145 protein YbjQ">
    <location>
        <begin position="1"/>
        <end position="107"/>
    </location>
</feature>
<comment type="similarity">
    <text evidence="1">Belongs to the UPF0145 family.</text>
</comment>